<keyword id="KW-0963">Cytoplasm</keyword>
<keyword id="KW-0507">mRNA processing</keyword>
<keyword id="KW-0508">mRNA splicing</keyword>
<keyword id="KW-0539">Nucleus</keyword>
<evidence type="ECO:0000250" key="1"/>
<evidence type="ECO:0000255" key="2">
    <source>
        <dbReference type="PROSITE-ProRule" id="PRU00092"/>
    </source>
</evidence>
<evidence type="ECO:0000255" key="3">
    <source>
        <dbReference type="PROSITE-ProRule" id="PRU00382"/>
    </source>
</evidence>
<evidence type="ECO:0000256" key="4">
    <source>
        <dbReference type="SAM" id="MobiDB-lite"/>
    </source>
</evidence>
<evidence type="ECO:0000305" key="5"/>
<proteinExistence type="inferred from homology"/>
<gene>
    <name type="primary">SQS1</name>
</gene>
<feature type="chain" id="PRO_0000325000" description="Protein SQS1">
    <location>
        <begin position="1"/>
        <end position="718"/>
    </location>
</feature>
<feature type="domain" description="R3H" evidence="3">
    <location>
        <begin position="537"/>
        <end position="599"/>
    </location>
</feature>
<feature type="domain" description="G-patch" evidence="2">
    <location>
        <begin position="673"/>
        <end position="718"/>
    </location>
</feature>
<feature type="region of interest" description="Disordered" evidence="4">
    <location>
        <begin position="247"/>
        <end position="301"/>
    </location>
</feature>
<feature type="region of interest" description="Disordered" evidence="4">
    <location>
        <begin position="341"/>
        <end position="404"/>
    </location>
</feature>
<feature type="region of interest" description="Disordered" evidence="4">
    <location>
        <begin position="430"/>
        <end position="452"/>
    </location>
</feature>
<feature type="compositionally biased region" description="Basic and acidic residues" evidence="4">
    <location>
        <begin position="265"/>
        <end position="282"/>
    </location>
</feature>
<feature type="compositionally biased region" description="Basic residues" evidence="4">
    <location>
        <begin position="283"/>
        <end position="293"/>
    </location>
</feature>
<feature type="compositionally biased region" description="Acidic residues" evidence="4">
    <location>
        <begin position="375"/>
        <end position="400"/>
    </location>
</feature>
<feature type="compositionally biased region" description="Polar residues" evidence="4">
    <location>
        <begin position="442"/>
        <end position="452"/>
    </location>
</feature>
<accession>Q875B6</accession>
<sequence>MQSPTLLTFDLPPESRAMSVPFPQRRFSRVSRTQMVRFPDSALAWLQDLAHLTPTDFSLKDEVRNTQSHHLDSAWTSGTVKLRQKPVSFVSAGYSEPLKLLEDIEQDKVPPGEATESKADDMDITTVDVNLNVSAEAVIEKTTLVELDSAAKGKMVLSNSTSQDNPSSETPQEQAQDLFFFDVSGDKAIRDKHRAVHPPPLVPIRKPSLAESDSSEEVILFRGRAGNAKTVPQSNFVVRNGVATNTTTAITPTGDKTKPTAAEETSLRDDPEVIPVAREKRAGRQRSRSKASKIPKTDEDDEEDAILADYIANMSANPEDDFISDQLRSFNNRRDLGGDNFALNLGSGDENDMPVVEDLSGDEQQAESSGSGLSDADEDNGDENDEADEDDDMDADMDDEGLARLLAKQEELGLGSDELVLIPESFGVSKRGAKKGGQKRATPSSFAKSANASSVADAFDDLDLADWTVPVPRKRRSKQPPNFNISDSEIEAKLKLDWSRDRERKKERKLARESLRGQGLLDKNASPDDLRVKYPVGLRLEDFKTELVAFLISSDERLEFPPLDKHGRMVLHQLALKFNVKSQSTGKGTTRRPVLYRSKRTITFKPHQITEATRQVDGAARRVGRKYFPRADVAGPRGDTPRDGFRGSAHVSVKALVLREGEVVGASAPELGQENKGRAMLEKMGWSKGMALGALENKGILEPVAQVVKKSKAGLGRT</sequence>
<organism>
    <name type="scientific">Podospora anserina</name>
    <name type="common">Pleurage anserina</name>
    <dbReference type="NCBI Taxonomy" id="2587412"/>
    <lineage>
        <taxon>Eukaryota</taxon>
        <taxon>Fungi</taxon>
        <taxon>Dikarya</taxon>
        <taxon>Ascomycota</taxon>
        <taxon>Pezizomycotina</taxon>
        <taxon>Sordariomycetes</taxon>
        <taxon>Sordariomycetidae</taxon>
        <taxon>Sordariales</taxon>
        <taxon>Podosporaceae</taxon>
        <taxon>Podospora</taxon>
    </lineage>
</organism>
<name>SQS1_PODAS</name>
<comment type="function">
    <text evidence="1">May be involved in splicing.</text>
</comment>
<comment type="subcellular location">
    <subcellularLocation>
        <location evidence="1">Cytoplasm</location>
    </subcellularLocation>
    <subcellularLocation>
        <location evidence="1">Nucleus</location>
    </subcellularLocation>
</comment>
<comment type="similarity">
    <text evidence="5">Belongs to the SQS1 family.</text>
</comment>
<reference key="1">
    <citation type="journal article" date="2003" name="Fungal Genet. Biol.">
        <title>Characterization of the genomic organization of the region bordering the centromere of chromosome V of Podospora anserina by direct sequencing.</title>
        <authorList>
            <person name="Silar P."/>
            <person name="Barreau C."/>
            <person name="Debuchy R."/>
            <person name="Kicka S."/>
            <person name="Turcq B."/>
            <person name="Sainsard-Chanet A."/>
            <person name="Sellem C.H."/>
            <person name="Billault A."/>
            <person name="Cattolico L."/>
            <person name="Duprat S."/>
            <person name="Weissenbach J."/>
        </authorList>
    </citation>
    <scope>NUCLEOTIDE SEQUENCE [LARGE SCALE GENOMIC DNA]</scope>
    <source>
        <strain>s</strain>
    </source>
</reference>
<dbReference type="EMBL" id="BX088700">
    <property type="protein sequence ID" value="CAD60695.1"/>
    <property type="molecule type" value="Genomic_DNA"/>
</dbReference>
<dbReference type="SMR" id="Q875B6"/>
<dbReference type="VEuPathDB" id="FungiDB:PODANS_5_5420"/>
<dbReference type="GO" id="GO:0005737">
    <property type="term" value="C:cytoplasm"/>
    <property type="evidence" value="ECO:0007669"/>
    <property type="project" value="UniProtKB-SubCell"/>
</dbReference>
<dbReference type="GO" id="GO:0005634">
    <property type="term" value="C:nucleus"/>
    <property type="evidence" value="ECO:0007669"/>
    <property type="project" value="UniProtKB-SubCell"/>
</dbReference>
<dbReference type="GO" id="GO:0003676">
    <property type="term" value="F:nucleic acid binding"/>
    <property type="evidence" value="ECO:0007669"/>
    <property type="project" value="InterPro"/>
</dbReference>
<dbReference type="GO" id="GO:0006397">
    <property type="term" value="P:mRNA processing"/>
    <property type="evidence" value="ECO:0007669"/>
    <property type="project" value="UniProtKB-KW"/>
</dbReference>
<dbReference type="GO" id="GO:0008380">
    <property type="term" value="P:RNA splicing"/>
    <property type="evidence" value="ECO:0007669"/>
    <property type="project" value="UniProtKB-KW"/>
</dbReference>
<dbReference type="CDD" id="cd02646">
    <property type="entry name" value="R3H_G-patch"/>
    <property type="match status" value="1"/>
</dbReference>
<dbReference type="Gene3D" id="3.30.1370.50">
    <property type="entry name" value="R3H-like domain"/>
    <property type="match status" value="1"/>
</dbReference>
<dbReference type="InterPro" id="IPR000467">
    <property type="entry name" value="G_patch_dom"/>
</dbReference>
<dbReference type="InterPro" id="IPR001374">
    <property type="entry name" value="R3H_dom"/>
</dbReference>
<dbReference type="InterPro" id="IPR036867">
    <property type="entry name" value="R3H_dom_sf"/>
</dbReference>
<dbReference type="InterPro" id="IPR034082">
    <property type="entry name" value="R3H_G-patch"/>
</dbReference>
<dbReference type="InterPro" id="IPR051189">
    <property type="entry name" value="Splicing_assoc_domain"/>
</dbReference>
<dbReference type="PANTHER" id="PTHR14195">
    <property type="entry name" value="G PATCH DOMAIN CONTAINING PROTEIN 2"/>
    <property type="match status" value="1"/>
</dbReference>
<dbReference type="Pfam" id="PF01585">
    <property type="entry name" value="G-patch"/>
    <property type="match status" value="1"/>
</dbReference>
<dbReference type="Pfam" id="PF01424">
    <property type="entry name" value="R3H"/>
    <property type="match status" value="1"/>
</dbReference>
<dbReference type="SMART" id="SM00443">
    <property type="entry name" value="G_patch"/>
    <property type="match status" value="1"/>
</dbReference>
<dbReference type="SMART" id="SM00393">
    <property type="entry name" value="R3H"/>
    <property type="match status" value="1"/>
</dbReference>
<dbReference type="SUPFAM" id="SSF82708">
    <property type="entry name" value="R3H domain"/>
    <property type="match status" value="1"/>
</dbReference>
<dbReference type="PROSITE" id="PS50174">
    <property type="entry name" value="G_PATCH"/>
    <property type="match status" value="1"/>
</dbReference>
<dbReference type="PROSITE" id="PS51061">
    <property type="entry name" value="R3H"/>
    <property type="match status" value="1"/>
</dbReference>
<protein>
    <recommendedName>
        <fullName>Protein SQS1</fullName>
    </recommendedName>
</protein>